<name>DAPF_BRAHW</name>
<reference key="1">
    <citation type="journal article" date="2009" name="PLoS ONE">
        <title>Genome sequence of the pathogenic intestinal spirochete Brachyspira hyodysenteriae reveals adaptations to its lifestyle in the porcine large intestine.</title>
        <authorList>
            <person name="Bellgard M.I."/>
            <person name="Wanchanthuek P."/>
            <person name="La T."/>
            <person name="Ryan K."/>
            <person name="Moolhuijzen P."/>
            <person name="Albertyn Z."/>
            <person name="Shaban B."/>
            <person name="Motro Y."/>
            <person name="Dunn D.S."/>
            <person name="Schibeci D."/>
            <person name="Hunter A."/>
            <person name="Barrero R."/>
            <person name="Phillips N.D."/>
            <person name="Hampson D.J."/>
        </authorList>
    </citation>
    <scope>NUCLEOTIDE SEQUENCE [LARGE SCALE GENOMIC DNA]</scope>
    <source>
        <strain>ATCC 49526 / WA1</strain>
    </source>
</reference>
<accession>C0QZX1</accession>
<protein>
    <recommendedName>
        <fullName evidence="1">Diaminopimelate epimerase</fullName>
        <shortName evidence="1">DAP epimerase</shortName>
        <ecNumber evidence="1">5.1.1.7</ecNumber>
    </recommendedName>
    <alternativeName>
        <fullName evidence="1">PLP-independent amino acid racemase</fullName>
    </alternativeName>
</protein>
<sequence>MDLSFTKMHGTGNDYIYINCFKEKFTVEDAIKYSPILSHRHYSIGADGIILIMPSDKADVQMRMFNYDGSESEMCGNGIRCVAKYAYDRGISKNNPMKIETLRGILEAELFLKDEEVDTVEISMSSPILEGLKIPTTIDKTPIINEPIIFNDKTYYFTAVSMGNPHAVIFVNDLHNMDISSIGSYMENNSIFPNRTNVEFVEIINRGEVKQRTWERGSGETLACGTGASAVCVAGFISGRTDNIILNHLLGGDLILRYENDNVFMKGEARYCFEGTITL</sequence>
<keyword id="KW-0028">Amino-acid biosynthesis</keyword>
<keyword id="KW-0963">Cytoplasm</keyword>
<keyword id="KW-0413">Isomerase</keyword>
<keyword id="KW-0457">Lysine biosynthesis</keyword>
<organism>
    <name type="scientific">Brachyspira hyodysenteriae (strain ATCC 49526 / WA1)</name>
    <dbReference type="NCBI Taxonomy" id="565034"/>
    <lineage>
        <taxon>Bacteria</taxon>
        <taxon>Pseudomonadati</taxon>
        <taxon>Spirochaetota</taxon>
        <taxon>Spirochaetia</taxon>
        <taxon>Brachyspirales</taxon>
        <taxon>Brachyspiraceae</taxon>
        <taxon>Brachyspira</taxon>
    </lineage>
</organism>
<dbReference type="EC" id="5.1.1.7" evidence="1"/>
<dbReference type="EMBL" id="CP001357">
    <property type="protein sequence ID" value="ACN83409.1"/>
    <property type="molecule type" value="Genomic_DNA"/>
</dbReference>
<dbReference type="RefSeq" id="WP_012670458.1">
    <property type="nucleotide sequence ID" value="NC_012225.1"/>
</dbReference>
<dbReference type="SMR" id="C0QZX1"/>
<dbReference type="STRING" id="565034.BHWA1_00918"/>
<dbReference type="KEGG" id="bhy:BHWA1_00918"/>
<dbReference type="eggNOG" id="COG0253">
    <property type="taxonomic scope" value="Bacteria"/>
</dbReference>
<dbReference type="HOGENOM" id="CLU_053306_3_0_12"/>
<dbReference type="UniPathway" id="UPA00034">
    <property type="reaction ID" value="UER00025"/>
</dbReference>
<dbReference type="Proteomes" id="UP000001803">
    <property type="component" value="Chromosome"/>
</dbReference>
<dbReference type="GO" id="GO:0005829">
    <property type="term" value="C:cytosol"/>
    <property type="evidence" value="ECO:0007669"/>
    <property type="project" value="TreeGrafter"/>
</dbReference>
<dbReference type="GO" id="GO:0008837">
    <property type="term" value="F:diaminopimelate epimerase activity"/>
    <property type="evidence" value="ECO:0007669"/>
    <property type="project" value="UniProtKB-UniRule"/>
</dbReference>
<dbReference type="GO" id="GO:0009089">
    <property type="term" value="P:lysine biosynthetic process via diaminopimelate"/>
    <property type="evidence" value="ECO:0007669"/>
    <property type="project" value="UniProtKB-UniRule"/>
</dbReference>
<dbReference type="Gene3D" id="3.10.310.10">
    <property type="entry name" value="Diaminopimelate Epimerase, Chain A, domain 1"/>
    <property type="match status" value="2"/>
</dbReference>
<dbReference type="HAMAP" id="MF_00197">
    <property type="entry name" value="DAP_epimerase"/>
    <property type="match status" value="1"/>
</dbReference>
<dbReference type="InterPro" id="IPR018510">
    <property type="entry name" value="DAP_epimerase_AS"/>
</dbReference>
<dbReference type="InterPro" id="IPR001653">
    <property type="entry name" value="DAP_epimerase_DapF"/>
</dbReference>
<dbReference type="NCBIfam" id="TIGR00652">
    <property type="entry name" value="DapF"/>
    <property type="match status" value="1"/>
</dbReference>
<dbReference type="PANTHER" id="PTHR31689:SF0">
    <property type="entry name" value="DIAMINOPIMELATE EPIMERASE"/>
    <property type="match status" value="1"/>
</dbReference>
<dbReference type="PANTHER" id="PTHR31689">
    <property type="entry name" value="DIAMINOPIMELATE EPIMERASE, CHLOROPLASTIC"/>
    <property type="match status" value="1"/>
</dbReference>
<dbReference type="Pfam" id="PF01678">
    <property type="entry name" value="DAP_epimerase"/>
    <property type="match status" value="2"/>
</dbReference>
<dbReference type="SUPFAM" id="SSF54506">
    <property type="entry name" value="Diaminopimelate epimerase-like"/>
    <property type="match status" value="2"/>
</dbReference>
<dbReference type="PROSITE" id="PS01326">
    <property type="entry name" value="DAP_EPIMERASE"/>
    <property type="match status" value="1"/>
</dbReference>
<feature type="chain" id="PRO_1000204056" description="Diaminopimelate epimerase">
    <location>
        <begin position="1"/>
        <end position="279"/>
    </location>
</feature>
<feature type="active site" description="Proton donor" evidence="1">
    <location>
        <position position="75"/>
    </location>
</feature>
<feature type="active site" description="Proton acceptor" evidence="1">
    <location>
        <position position="224"/>
    </location>
</feature>
<feature type="binding site" evidence="1">
    <location>
        <position position="13"/>
    </location>
    <ligand>
        <name>substrate</name>
    </ligand>
</feature>
<feature type="binding site" evidence="1">
    <location>
        <position position="66"/>
    </location>
    <ligand>
        <name>substrate</name>
    </ligand>
</feature>
<feature type="binding site" evidence="1">
    <location>
        <begin position="76"/>
        <end position="77"/>
    </location>
    <ligand>
        <name>substrate</name>
    </ligand>
</feature>
<feature type="binding site" evidence="1">
    <location>
        <position position="164"/>
    </location>
    <ligand>
        <name>substrate</name>
    </ligand>
</feature>
<feature type="binding site" evidence="1">
    <location>
        <position position="197"/>
    </location>
    <ligand>
        <name>substrate</name>
    </ligand>
</feature>
<feature type="binding site" evidence="1">
    <location>
        <begin position="215"/>
        <end position="216"/>
    </location>
    <ligand>
        <name>substrate</name>
    </ligand>
</feature>
<feature type="binding site" evidence="1">
    <location>
        <begin position="225"/>
        <end position="226"/>
    </location>
    <ligand>
        <name>substrate</name>
    </ligand>
</feature>
<feature type="site" description="Could be important to modulate the pK values of the two catalytic cysteine residues" evidence="1">
    <location>
        <position position="166"/>
    </location>
</feature>
<feature type="site" description="Could be important to modulate the pK values of the two catalytic cysteine residues" evidence="1">
    <location>
        <position position="215"/>
    </location>
</feature>
<gene>
    <name evidence="1" type="primary">dapF</name>
    <name type="ordered locus">BHWA1_00918</name>
</gene>
<comment type="function">
    <text evidence="1">Catalyzes the stereoinversion of LL-2,6-diaminopimelate (L,L-DAP) to meso-diaminopimelate (meso-DAP), a precursor of L-lysine and an essential component of the bacterial peptidoglycan.</text>
</comment>
<comment type="catalytic activity">
    <reaction evidence="1">
        <text>(2S,6S)-2,6-diaminopimelate = meso-2,6-diaminopimelate</text>
        <dbReference type="Rhea" id="RHEA:15393"/>
        <dbReference type="ChEBI" id="CHEBI:57609"/>
        <dbReference type="ChEBI" id="CHEBI:57791"/>
        <dbReference type="EC" id="5.1.1.7"/>
    </reaction>
</comment>
<comment type="pathway">
    <text evidence="1">Amino-acid biosynthesis; L-lysine biosynthesis via DAP pathway; DL-2,6-diaminopimelate from LL-2,6-diaminopimelate: step 1/1.</text>
</comment>
<comment type="subunit">
    <text evidence="1">Homodimer.</text>
</comment>
<comment type="subcellular location">
    <subcellularLocation>
        <location evidence="1">Cytoplasm</location>
    </subcellularLocation>
</comment>
<comment type="similarity">
    <text evidence="1">Belongs to the diaminopimelate epimerase family.</text>
</comment>
<evidence type="ECO:0000255" key="1">
    <source>
        <dbReference type="HAMAP-Rule" id="MF_00197"/>
    </source>
</evidence>
<proteinExistence type="inferred from homology"/>